<comment type="function">
    <text>Removes, in the presence of oxygen, 4 hydrogen atoms from delta-L-(alpha-aminoadipyl)-L-cysteinyl-D-valine (ACV) to form the azetidinone and thiazolidine rings of isopenicillin.</text>
</comment>
<comment type="catalytic activity">
    <reaction>
        <text>N-[(5S)-5-amino-5-carboxypentanoyl]-L-cysteinyl-D-valine + O2 = isopenicillin N + 2 H2O</text>
        <dbReference type="Rhea" id="RHEA:22428"/>
        <dbReference type="ChEBI" id="CHEBI:15377"/>
        <dbReference type="ChEBI" id="CHEBI:15379"/>
        <dbReference type="ChEBI" id="CHEBI:58399"/>
        <dbReference type="ChEBI" id="CHEBI:58572"/>
        <dbReference type="EC" id="1.21.3.1"/>
    </reaction>
</comment>
<comment type="cofactor">
    <cofactor>
        <name>Fe cation</name>
        <dbReference type="ChEBI" id="CHEBI:24875"/>
    </cofactor>
</comment>
<comment type="cofactor">
    <cofactor>
        <name>L-ascorbate</name>
        <dbReference type="ChEBI" id="CHEBI:38290"/>
    </cofactor>
</comment>
<comment type="pathway">
    <text>Antibiotic biosynthesis; penicillin G biosynthesis; penicillin G from L-alpha-aminoadipate and L-cysteine and L-valine: step 2/3.</text>
</comment>
<comment type="similarity">
    <text evidence="3">Belongs to the iron/ascorbate-dependent oxidoreductase family.</text>
</comment>
<dbReference type="EC" id="1.21.3.1"/>
<dbReference type="EMBL" id="M19421">
    <property type="protein sequence ID" value="AAA26770.1"/>
    <property type="molecule type" value="Genomic_DNA"/>
</dbReference>
<dbReference type="PIR" id="A29894">
    <property type="entry name" value="A29894"/>
</dbReference>
<dbReference type="RefSeq" id="WP_003952506.1">
    <property type="nucleotide sequence ID" value="NZ_CM000913.1"/>
</dbReference>
<dbReference type="SMR" id="P10621"/>
<dbReference type="STRING" id="1901.BB341_07795"/>
<dbReference type="GeneID" id="93729322"/>
<dbReference type="KEGG" id="sclf:BB341_07795"/>
<dbReference type="eggNOG" id="COG3491">
    <property type="taxonomic scope" value="Bacteria"/>
</dbReference>
<dbReference type="OrthoDB" id="21825at2"/>
<dbReference type="BRENDA" id="1.21.3.1">
    <property type="organism ID" value="5988"/>
</dbReference>
<dbReference type="UniPathway" id="UPA00149">
    <property type="reaction ID" value="UER00240"/>
</dbReference>
<dbReference type="GO" id="GO:0005506">
    <property type="term" value="F:iron ion binding"/>
    <property type="evidence" value="ECO:0007669"/>
    <property type="project" value="InterPro"/>
</dbReference>
<dbReference type="GO" id="GO:0016216">
    <property type="term" value="F:isopenicillin-N synthase activity"/>
    <property type="evidence" value="ECO:0007669"/>
    <property type="project" value="UniProtKB-EC"/>
</dbReference>
<dbReference type="GO" id="GO:0031418">
    <property type="term" value="F:L-ascorbic acid binding"/>
    <property type="evidence" value="ECO:0007669"/>
    <property type="project" value="UniProtKB-KW"/>
</dbReference>
<dbReference type="GO" id="GO:0017000">
    <property type="term" value="P:antibiotic biosynthetic process"/>
    <property type="evidence" value="ECO:0007669"/>
    <property type="project" value="UniProtKB-KW"/>
</dbReference>
<dbReference type="Gene3D" id="2.60.120.330">
    <property type="entry name" value="B-lactam Antibiotic, Isopenicillin N Synthase, Chain"/>
    <property type="match status" value="1"/>
</dbReference>
<dbReference type="InterPro" id="IPR026992">
    <property type="entry name" value="DIOX_N"/>
</dbReference>
<dbReference type="InterPro" id="IPR044861">
    <property type="entry name" value="IPNS-like_FE2OG_OXY"/>
</dbReference>
<dbReference type="InterPro" id="IPR027443">
    <property type="entry name" value="IPNS-like_sf"/>
</dbReference>
<dbReference type="InterPro" id="IPR050231">
    <property type="entry name" value="Iron_ascorbate_oxido_reductase"/>
</dbReference>
<dbReference type="InterPro" id="IPR002057">
    <property type="entry name" value="Isopenicillin-N_synth_CS"/>
</dbReference>
<dbReference type="InterPro" id="IPR005123">
    <property type="entry name" value="Oxoglu/Fe-dep_dioxygenase_dom"/>
</dbReference>
<dbReference type="PANTHER" id="PTHR47990">
    <property type="entry name" value="2-OXOGLUTARATE (2OG) AND FE(II)-DEPENDENT OXYGENASE SUPERFAMILY PROTEIN-RELATED"/>
    <property type="match status" value="1"/>
</dbReference>
<dbReference type="Pfam" id="PF03171">
    <property type="entry name" value="2OG-FeII_Oxy"/>
    <property type="match status" value="1"/>
</dbReference>
<dbReference type="Pfam" id="PF14226">
    <property type="entry name" value="DIOX_N"/>
    <property type="match status" value="1"/>
</dbReference>
<dbReference type="PRINTS" id="PR00682">
    <property type="entry name" value="IPNSYNTHASE"/>
</dbReference>
<dbReference type="SUPFAM" id="SSF51197">
    <property type="entry name" value="Clavaminate synthase-like"/>
    <property type="match status" value="1"/>
</dbReference>
<dbReference type="PROSITE" id="PS51471">
    <property type="entry name" value="FE2OG_OXY"/>
    <property type="match status" value="1"/>
</dbReference>
<dbReference type="PROSITE" id="PS00185">
    <property type="entry name" value="IPNS_1"/>
    <property type="match status" value="1"/>
</dbReference>
<dbReference type="PROSITE" id="PS00186">
    <property type="entry name" value="IPNS_2"/>
    <property type="match status" value="1"/>
</dbReference>
<evidence type="ECO:0000250" key="1">
    <source>
        <dbReference type="UniProtKB" id="P05326"/>
    </source>
</evidence>
<evidence type="ECO:0000255" key="2">
    <source>
        <dbReference type="PROSITE-ProRule" id="PRU00805"/>
    </source>
</evidence>
<evidence type="ECO:0000305" key="3"/>
<gene>
    <name type="primary">pcbC</name>
</gene>
<reference key="1">
    <citation type="journal article" date="1988" name="Gene">
        <title>Cloning and nucleotide sequence determination of the isopenicillin N synthetase gene from Streptomyces clavuligerus.</title>
        <authorList>
            <person name="Leskiw B.K."/>
            <person name="Aharonowitz Y."/>
            <person name="Mevarech M."/>
            <person name="Wolfe S."/>
            <person name="Vining L.C."/>
            <person name="Westlake D.W.S."/>
            <person name="Jensen S.E."/>
        </authorList>
    </citation>
    <scope>NUCLEOTIDE SEQUENCE [GENOMIC DNA]</scope>
    <source>
        <strain>ATCC 27064 / DSM 738 / JCM 4710 / NBRC 13307 / NCIMB 12785 / NRRL 3585 / VKM Ac-602</strain>
    </source>
</reference>
<organism>
    <name type="scientific">Streptomyces clavuligerus</name>
    <dbReference type="NCBI Taxonomy" id="1901"/>
    <lineage>
        <taxon>Bacteria</taxon>
        <taxon>Bacillati</taxon>
        <taxon>Actinomycetota</taxon>
        <taxon>Actinomycetes</taxon>
        <taxon>Kitasatosporales</taxon>
        <taxon>Streptomycetaceae</taxon>
        <taxon>Streptomyces</taxon>
    </lineage>
</organism>
<sequence length="329" mass="36959">MPVLMPSAHVPTIDISPLFGTDAAAKKRVAEEIHGACRGSGFFYATNHGVDVQQLQDVVNEFHGAMTDQEKHDLAIHAYNPDNPHVRNGYYKAVPGRKAVESFCYLNPDFGEDHPMIAAGTPMHEVNLWPDEERHPRFRPFCEGYYRQMLKLSTVLMRGLALALGRPEHFFDAALAEQDSLSSVSLIRYPYLEEYPPVKTGPDGQLLSFEDHLDVSMITVLFQTQVQNLQVETVDGWRDIPTSENDFLVNCGTYMAHVTNDYFPAPNHRVKFVNAERLSLPFFLNGGHEAVIEPFVPEGASEEVRNEALSYGDYLQHGLRALIVKNGQT</sequence>
<keyword id="KW-0045">Antibiotic biosynthesis</keyword>
<keyword id="KW-0408">Iron</keyword>
<keyword id="KW-0479">Metal-binding</keyword>
<keyword id="KW-0560">Oxidoreductase</keyword>
<keyword id="KW-0847">Vitamin C</keyword>
<name>IPNS_STRCL</name>
<protein>
    <recommendedName>
        <fullName>Isopenicillin N synthase</fullName>
        <shortName>IPNS</shortName>
        <ecNumber>1.21.3.1</ecNumber>
    </recommendedName>
</protein>
<accession>P10621</accession>
<proteinExistence type="inferred from homology"/>
<feature type="chain" id="PRO_0000219504" description="Isopenicillin N synthase">
    <location>
        <begin position="1"/>
        <end position="329"/>
    </location>
</feature>
<feature type="domain" description="Fe2OG dioxygenase" evidence="2">
    <location>
        <begin position="180"/>
        <end position="286"/>
    </location>
</feature>
<feature type="binding site" evidence="1">
    <location>
        <position position="87"/>
    </location>
    <ligand>
        <name>isopenicillin N</name>
        <dbReference type="ChEBI" id="CHEBI:58399"/>
    </ligand>
</feature>
<feature type="binding site" evidence="1">
    <location>
        <position position="87"/>
    </location>
    <ligand>
        <name>N-[(5S)-5-amino-5-carboxypentanoyl]-L-cysteinyl-D-valine</name>
        <dbReference type="ChEBI" id="CHEBI:58572"/>
    </ligand>
</feature>
<feature type="binding site" evidence="1">
    <location>
        <position position="91"/>
    </location>
    <ligand>
        <name>isopenicillin N</name>
        <dbReference type="ChEBI" id="CHEBI:58399"/>
    </ligand>
</feature>
<feature type="binding site" evidence="1">
    <location>
        <position position="91"/>
    </location>
    <ligand>
        <name>N-[(5S)-5-amino-5-carboxypentanoyl]-L-cysteinyl-D-valine</name>
        <dbReference type="ChEBI" id="CHEBI:58572"/>
    </ligand>
</feature>
<feature type="binding site" evidence="1">
    <location>
        <position position="183"/>
    </location>
    <ligand>
        <name>isopenicillin N</name>
        <dbReference type="ChEBI" id="CHEBI:58399"/>
    </ligand>
</feature>
<feature type="binding site" evidence="1">
    <location>
        <position position="183"/>
    </location>
    <ligand>
        <name>N-[(5S)-5-amino-5-carboxypentanoyl]-L-cysteinyl-D-valine</name>
        <dbReference type="ChEBI" id="CHEBI:58572"/>
    </ligand>
</feature>
<feature type="binding site" evidence="1">
    <location>
        <position position="189"/>
    </location>
    <ligand>
        <name>isopenicillin N</name>
        <dbReference type="ChEBI" id="CHEBI:58399"/>
    </ligand>
</feature>
<feature type="binding site" evidence="1">
    <location>
        <position position="189"/>
    </location>
    <ligand>
        <name>N-[(5S)-5-amino-5-carboxypentanoyl]-L-cysteinyl-D-valine</name>
        <dbReference type="ChEBI" id="CHEBI:58572"/>
    </ligand>
</feature>
<feature type="binding site" evidence="2">
    <location>
        <position position="212"/>
    </location>
    <ligand>
        <name>Fe(2+)</name>
        <dbReference type="ChEBI" id="CHEBI:29033"/>
    </ligand>
</feature>
<feature type="binding site" evidence="1">
    <location>
        <position position="212"/>
    </location>
    <ligand>
        <name>N-[(5S)-5-amino-5-carboxypentanoyl]-L-cysteinyl-D-valine</name>
        <dbReference type="ChEBI" id="CHEBI:58572"/>
    </ligand>
</feature>
<feature type="binding site" evidence="2">
    <location>
        <position position="214"/>
    </location>
    <ligand>
        <name>Fe(2+)</name>
        <dbReference type="ChEBI" id="CHEBI:29033"/>
    </ligand>
</feature>
<feature type="binding site" evidence="1">
    <location>
        <position position="214"/>
    </location>
    <ligand>
        <name>N-[(5S)-5-amino-5-carboxypentanoyl]-L-cysteinyl-D-valine</name>
        <dbReference type="ChEBI" id="CHEBI:58572"/>
    </ligand>
</feature>
<feature type="binding site" evidence="2">
    <location>
        <position position="268"/>
    </location>
    <ligand>
        <name>Fe(2+)</name>
        <dbReference type="ChEBI" id="CHEBI:29033"/>
    </ligand>
</feature>
<feature type="binding site" evidence="2">
    <location>
        <position position="277"/>
    </location>
    <ligand>
        <name>2-oxoglutarate</name>
        <dbReference type="ChEBI" id="CHEBI:16810"/>
    </ligand>
</feature>
<feature type="binding site" evidence="1">
    <location>
        <position position="279"/>
    </location>
    <ligand>
        <name>isopenicillin N</name>
        <dbReference type="ChEBI" id="CHEBI:58399"/>
    </ligand>
</feature>
<feature type="binding site" evidence="1">
    <location>
        <position position="279"/>
    </location>
    <ligand>
        <name>N-[(5S)-5-amino-5-carboxypentanoyl]-L-cysteinyl-D-valine</name>
        <dbReference type="ChEBI" id="CHEBI:58572"/>
    </ligand>
</feature>